<evidence type="ECO:0000255" key="1">
    <source>
        <dbReference type="HAMAP-Rule" id="MF_01961"/>
    </source>
</evidence>
<evidence type="ECO:0000256" key="2">
    <source>
        <dbReference type="SAM" id="MobiDB-lite"/>
    </source>
</evidence>
<protein>
    <recommendedName>
        <fullName evidence="1">Catalase-peroxidase</fullName>
        <shortName evidence="1">CP</shortName>
        <ecNumber evidence="1">1.11.1.21</ecNumber>
    </recommendedName>
    <alternativeName>
        <fullName evidence="1">Peroxidase/catalase</fullName>
    </alternativeName>
</protein>
<accession>A4YNR8</accession>
<feature type="chain" id="PRO_0000354729" description="Catalase-peroxidase">
    <location>
        <begin position="1"/>
        <end position="726"/>
    </location>
</feature>
<feature type="region of interest" description="Disordered" evidence="2">
    <location>
        <begin position="338"/>
        <end position="359"/>
    </location>
</feature>
<feature type="active site" description="Proton acceptor" evidence="1">
    <location>
        <position position="91"/>
    </location>
</feature>
<feature type="binding site" description="axial binding residue" evidence="1">
    <location>
        <position position="254"/>
    </location>
    <ligand>
        <name>heme b</name>
        <dbReference type="ChEBI" id="CHEBI:60344"/>
    </ligand>
    <ligandPart>
        <name>Fe</name>
        <dbReference type="ChEBI" id="CHEBI:18248"/>
    </ligandPart>
</feature>
<feature type="site" description="Transition state stabilizer" evidence="1">
    <location>
        <position position="87"/>
    </location>
</feature>
<feature type="cross-link" description="Tryptophyl-tyrosyl-methioninium (Trp-Tyr) (with M-239)" evidence="1">
    <location>
        <begin position="90"/>
        <end position="213"/>
    </location>
</feature>
<feature type="cross-link" description="Tryptophyl-tyrosyl-methioninium (Tyr-Met) (with W-90)" evidence="1">
    <location>
        <begin position="213"/>
        <end position="239"/>
    </location>
</feature>
<reference key="1">
    <citation type="journal article" date="2007" name="Science">
        <title>Legumes symbioses: absence of nod genes in photosynthetic bradyrhizobia.</title>
        <authorList>
            <person name="Giraud E."/>
            <person name="Moulin L."/>
            <person name="Vallenet D."/>
            <person name="Barbe V."/>
            <person name="Cytryn E."/>
            <person name="Avarre J.-C."/>
            <person name="Jaubert M."/>
            <person name="Simon D."/>
            <person name="Cartieaux F."/>
            <person name="Prin Y."/>
            <person name="Bena G."/>
            <person name="Hannibal L."/>
            <person name="Fardoux J."/>
            <person name="Kojadinovic M."/>
            <person name="Vuillet L."/>
            <person name="Lajus A."/>
            <person name="Cruveiller S."/>
            <person name="Rouy Z."/>
            <person name="Mangenot S."/>
            <person name="Segurens B."/>
            <person name="Dossat C."/>
            <person name="Franck W.L."/>
            <person name="Chang W.-S."/>
            <person name="Saunders E."/>
            <person name="Bruce D."/>
            <person name="Richardson P."/>
            <person name="Normand P."/>
            <person name="Dreyfus B."/>
            <person name="Pignol D."/>
            <person name="Stacey G."/>
            <person name="Emerich D."/>
            <person name="Vermeglio A."/>
            <person name="Medigue C."/>
            <person name="Sadowsky M."/>
        </authorList>
    </citation>
    <scope>NUCLEOTIDE SEQUENCE [LARGE SCALE GENOMIC DNA]</scope>
    <source>
        <strain>ORS 278</strain>
    </source>
</reference>
<dbReference type="EC" id="1.11.1.21" evidence="1"/>
<dbReference type="EMBL" id="CU234118">
    <property type="protein sequence ID" value="CAL75544.1"/>
    <property type="molecule type" value="Genomic_DNA"/>
</dbReference>
<dbReference type="RefSeq" id="WP_011924772.1">
    <property type="nucleotide sequence ID" value="NC_009445.1"/>
</dbReference>
<dbReference type="SMR" id="A4YNR8"/>
<dbReference type="STRING" id="114615.BRADO1666"/>
<dbReference type="KEGG" id="bra:BRADO1666"/>
<dbReference type="eggNOG" id="COG0376">
    <property type="taxonomic scope" value="Bacteria"/>
</dbReference>
<dbReference type="HOGENOM" id="CLU_025424_2_0_5"/>
<dbReference type="OrthoDB" id="9759743at2"/>
<dbReference type="Proteomes" id="UP000001994">
    <property type="component" value="Chromosome"/>
</dbReference>
<dbReference type="GO" id="GO:0005829">
    <property type="term" value="C:cytosol"/>
    <property type="evidence" value="ECO:0007669"/>
    <property type="project" value="TreeGrafter"/>
</dbReference>
<dbReference type="GO" id="GO:0004096">
    <property type="term" value="F:catalase activity"/>
    <property type="evidence" value="ECO:0007669"/>
    <property type="project" value="UniProtKB-UniRule"/>
</dbReference>
<dbReference type="GO" id="GO:0020037">
    <property type="term" value="F:heme binding"/>
    <property type="evidence" value="ECO:0007669"/>
    <property type="project" value="InterPro"/>
</dbReference>
<dbReference type="GO" id="GO:0046872">
    <property type="term" value="F:metal ion binding"/>
    <property type="evidence" value="ECO:0007669"/>
    <property type="project" value="UniProtKB-KW"/>
</dbReference>
<dbReference type="GO" id="GO:0070301">
    <property type="term" value="P:cellular response to hydrogen peroxide"/>
    <property type="evidence" value="ECO:0007669"/>
    <property type="project" value="TreeGrafter"/>
</dbReference>
<dbReference type="GO" id="GO:0042744">
    <property type="term" value="P:hydrogen peroxide catabolic process"/>
    <property type="evidence" value="ECO:0007669"/>
    <property type="project" value="UniProtKB-KW"/>
</dbReference>
<dbReference type="CDD" id="cd00649">
    <property type="entry name" value="catalase_peroxidase_1"/>
    <property type="match status" value="1"/>
</dbReference>
<dbReference type="CDD" id="cd08200">
    <property type="entry name" value="catalase_peroxidase_2"/>
    <property type="match status" value="1"/>
</dbReference>
<dbReference type="FunFam" id="1.10.420.10:FF:000002">
    <property type="entry name" value="Catalase-peroxidase"/>
    <property type="match status" value="1"/>
</dbReference>
<dbReference type="FunFam" id="1.10.420.10:FF:000004">
    <property type="entry name" value="Catalase-peroxidase"/>
    <property type="match status" value="1"/>
</dbReference>
<dbReference type="FunFam" id="1.10.520.10:FF:000002">
    <property type="entry name" value="Catalase-peroxidase"/>
    <property type="match status" value="1"/>
</dbReference>
<dbReference type="FunFam" id="1.10.520.10:FF:000004">
    <property type="entry name" value="Catalase-peroxidase"/>
    <property type="match status" value="1"/>
</dbReference>
<dbReference type="Gene3D" id="1.10.520.10">
    <property type="match status" value="2"/>
</dbReference>
<dbReference type="Gene3D" id="1.10.420.10">
    <property type="entry name" value="Peroxidase, domain 2"/>
    <property type="match status" value="2"/>
</dbReference>
<dbReference type="HAMAP" id="MF_01961">
    <property type="entry name" value="Catal_peroxid"/>
    <property type="match status" value="1"/>
</dbReference>
<dbReference type="InterPro" id="IPR000763">
    <property type="entry name" value="Catalase_peroxidase"/>
</dbReference>
<dbReference type="InterPro" id="IPR002016">
    <property type="entry name" value="Haem_peroxidase"/>
</dbReference>
<dbReference type="InterPro" id="IPR010255">
    <property type="entry name" value="Haem_peroxidase_sf"/>
</dbReference>
<dbReference type="InterPro" id="IPR019794">
    <property type="entry name" value="Peroxidases_AS"/>
</dbReference>
<dbReference type="InterPro" id="IPR019793">
    <property type="entry name" value="Peroxidases_heam-ligand_BS"/>
</dbReference>
<dbReference type="NCBIfam" id="TIGR00198">
    <property type="entry name" value="cat_per_HPI"/>
    <property type="match status" value="1"/>
</dbReference>
<dbReference type="NCBIfam" id="NF011635">
    <property type="entry name" value="PRK15061.1"/>
    <property type="match status" value="1"/>
</dbReference>
<dbReference type="PANTHER" id="PTHR30555:SF0">
    <property type="entry name" value="CATALASE-PEROXIDASE"/>
    <property type="match status" value="1"/>
</dbReference>
<dbReference type="PANTHER" id="PTHR30555">
    <property type="entry name" value="HYDROPEROXIDASE I, BIFUNCTIONAL CATALASE-PEROXIDASE"/>
    <property type="match status" value="1"/>
</dbReference>
<dbReference type="Pfam" id="PF00141">
    <property type="entry name" value="peroxidase"/>
    <property type="match status" value="2"/>
</dbReference>
<dbReference type="PRINTS" id="PR00460">
    <property type="entry name" value="BPEROXIDASE"/>
</dbReference>
<dbReference type="PRINTS" id="PR00458">
    <property type="entry name" value="PEROXIDASE"/>
</dbReference>
<dbReference type="SUPFAM" id="SSF48113">
    <property type="entry name" value="Heme-dependent peroxidases"/>
    <property type="match status" value="2"/>
</dbReference>
<dbReference type="PROSITE" id="PS00435">
    <property type="entry name" value="PEROXIDASE_1"/>
    <property type="match status" value="1"/>
</dbReference>
<dbReference type="PROSITE" id="PS00436">
    <property type="entry name" value="PEROXIDASE_2"/>
    <property type="match status" value="1"/>
</dbReference>
<dbReference type="PROSITE" id="PS50873">
    <property type="entry name" value="PEROXIDASE_4"/>
    <property type="match status" value="1"/>
</dbReference>
<sequence>MDDVSKCPFSGGLKGFKNKDWWPNQLDLSVLHQHSNLSDPLGEAFDYAKEFKSLDLDALVKDLHALMTDSQEWWPADFGHYGPLFIRMAWHAAGTYRIGDGRGGAGTGQQRFAPLNSWPDNANLDKARRLLWPIKQKYGQKISWADLFVLTGNVALESMGFKTFGFGGGRADTWEPEQDIYWGPEGKWLADERYSGDRELAGSLAAVQMGLIYVNPEGPNGKPDPAAAARDIRETFARMAMNDEETVALIAGGHTFGKTHGAGDASLVGVEPEGADIAQQGLGWASKYASGKAGDTITSGLEVIWTTTPTKWSNNYFENLFNYEWELTKSPAGAHQWTPKGGAGAGTVPDAHDPSKRHAPSMLTTDIALRVDPAYEKISRRFLEHPDQFADAFARAWFKLTHRDMGPKARYLGPLVPKEELIWQDPVPALDHPVVDDKDVAALKAKILAAGLSVSQLVSTAWASASTFRGSDKRGGANGARIRLAPQKDWAINNPAELSKVLAKLEGIQKEFNGSATGGKKVSLADLIVLAGNAGVEAAAKKAGVEVTVPFAPGRTDASQEQTDVESFAVLEPTHDGFRNYLSGKQWLSGEELLVDKAQLLTLTAPETTVLVGGLRVLGANAAGSKHGVFTTQPEVLSNDFFVNLLDMGIAWTPVDQGEHTFEGRDRKSGAVKWTATRADLIFGSHSQLRALAEVYASSDAKQKFVKDFVAAWTKVMNLDRFELKA</sequence>
<proteinExistence type="inferred from homology"/>
<keyword id="KW-0349">Heme</keyword>
<keyword id="KW-0376">Hydrogen peroxide</keyword>
<keyword id="KW-0408">Iron</keyword>
<keyword id="KW-0479">Metal-binding</keyword>
<keyword id="KW-0560">Oxidoreductase</keyword>
<keyword id="KW-0575">Peroxidase</keyword>
<keyword id="KW-1185">Reference proteome</keyword>
<name>KATG_BRASO</name>
<organism>
    <name type="scientific">Bradyrhizobium sp. (strain ORS 278)</name>
    <dbReference type="NCBI Taxonomy" id="114615"/>
    <lineage>
        <taxon>Bacteria</taxon>
        <taxon>Pseudomonadati</taxon>
        <taxon>Pseudomonadota</taxon>
        <taxon>Alphaproteobacteria</taxon>
        <taxon>Hyphomicrobiales</taxon>
        <taxon>Nitrobacteraceae</taxon>
        <taxon>Bradyrhizobium</taxon>
    </lineage>
</organism>
<gene>
    <name evidence="1" type="primary">katG</name>
    <name type="ordered locus">BRADO1666</name>
</gene>
<comment type="function">
    <text evidence="1">Bifunctional enzyme with both catalase and broad-spectrum peroxidase activity.</text>
</comment>
<comment type="catalytic activity">
    <reaction evidence="1">
        <text>H2O2 + AH2 = A + 2 H2O</text>
        <dbReference type="Rhea" id="RHEA:30275"/>
        <dbReference type="ChEBI" id="CHEBI:13193"/>
        <dbReference type="ChEBI" id="CHEBI:15377"/>
        <dbReference type="ChEBI" id="CHEBI:16240"/>
        <dbReference type="ChEBI" id="CHEBI:17499"/>
        <dbReference type="EC" id="1.11.1.21"/>
    </reaction>
</comment>
<comment type="catalytic activity">
    <reaction evidence="1">
        <text>2 H2O2 = O2 + 2 H2O</text>
        <dbReference type="Rhea" id="RHEA:20309"/>
        <dbReference type="ChEBI" id="CHEBI:15377"/>
        <dbReference type="ChEBI" id="CHEBI:15379"/>
        <dbReference type="ChEBI" id="CHEBI:16240"/>
        <dbReference type="EC" id="1.11.1.21"/>
    </reaction>
</comment>
<comment type="cofactor">
    <cofactor evidence="1">
        <name>heme b</name>
        <dbReference type="ChEBI" id="CHEBI:60344"/>
    </cofactor>
    <text evidence="1">Binds 1 heme b (iron(II)-protoporphyrin IX) group per dimer.</text>
</comment>
<comment type="subunit">
    <text evidence="1">Homodimer or homotetramer.</text>
</comment>
<comment type="PTM">
    <text evidence="1">Formation of the three residue Trp-Tyr-Met cross-link is important for the catalase, but not the peroxidase activity of the enzyme.</text>
</comment>
<comment type="similarity">
    <text evidence="1">Belongs to the peroxidase family. Peroxidase/catalase subfamily.</text>
</comment>